<name>CH60_CHLP8</name>
<organism>
    <name type="scientific">Chlorobaculum parvum (strain DSM 263 / NCIMB 8327)</name>
    <name type="common">Chlorobium vibrioforme subsp. thiosulfatophilum</name>
    <dbReference type="NCBI Taxonomy" id="517417"/>
    <lineage>
        <taxon>Bacteria</taxon>
        <taxon>Pseudomonadati</taxon>
        <taxon>Chlorobiota</taxon>
        <taxon>Chlorobiia</taxon>
        <taxon>Chlorobiales</taxon>
        <taxon>Chlorobiaceae</taxon>
        <taxon>Chlorobaculum</taxon>
    </lineage>
</organism>
<dbReference type="EC" id="5.6.1.7" evidence="1"/>
<dbReference type="EMBL" id="CP001099">
    <property type="protein sequence ID" value="ACF11768.1"/>
    <property type="molecule type" value="Genomic_DNA"/>
</dbReference>
<dbReference type="RefSeq" id="WP_012502601.1">
    <property type="nucleotide sequence ID" value="NC_011027.1"/>
</dbReference>
<dbReference type="SMR" id="B3QPB5"/>
<dbReference type="STRING" id="517417.Cpar_1366"/>
<dbReference type="KEGG" id="cpc:Cpar_1366"/>
<dbReference type="eggNOG" id="COG0459">
    <property type="taxonomic scope" value="Bacteria"/>
</dbReference>
<dbReference type="HOGENOM" id="CLU_016503_3_0_10"/>
<dbReference type="OrthoDB" id="9766614at2"/>
<dbReference type="Proteomes" id="UP000008811">
    <property type="component" value="Chromosome"/>
</dbReference>
<dbReference type="GO" id="GO:0005737">
    <property type="term" value="C:cytoplasm"/>
    <property type="evidence" value="ECO:0007669"/>
    <property type="project" value="UniProtKB-SubCell"/>
</dbReference>
<dbReference type="GO" id="GO:0005524">
    <property type="term" value="F:ATP binding"/>
    <property type="evidence" value="ECO:0007669"/>
    <property type="project" value="UniProtKB-UniRule"/>
</dbReference>
<dbReference type="GO" id="GO:0140662">
    <property type="term" value="F:ATP-dependent protein folding chaperone"/>
    <property type="evidence" value="ECO:0007669"/>
    <property type="project" value="InterPro"/>
</dbReference>
<dbReference type="GO" id="GO:0016853">
    <property type="term" value="F:isomerase activity"/>
    <property type="evidence" value="ECO:0007669"/>
    <property type="project" value="UniProtKB-KW"/>
</dbReference>
<dbReference type="GO" id="GO:0051082">
    <property type="term" value="F:unfolded protein binding"/>
    <property type="evidence" value="ECO:0007669"/>
    <property type="project" value="UniProtKB-UniRule"/>
</dbReference>
<dbReference type="GO" id="GO:0042026">
    <property type="term" value="P:protein refolding"/>
    <property type="evidence" value="ECO:0007669"/>
    <property type="project" value="UniProtKB-UniRule"/>
</dbReference>
<dbReference type="CDD" id="cd03344">
    <property type="entry name" value="GroEL"/>
    <property type="match status" value="1"/>
</dbReference>
<dbReference type="FunFam" id="1.10.560.10:FF:000001">
    <property type="entry name" value="60 kDa chaperonin"/>
    <property type="match status" value="1"/>
</dbReference>
<dbReference type="FunFam" id="3.50.7.10:FF:000001">
    <property type="entry name" value="60 kDa chaperonin"/>
    <property type="match status" value="1"/>
</dbReference>
<dbReference type="Gene3D" id="3.50.7.10">
    <property type="entry name" value="GroEL"/>
    <property type="match status" value="1"/>
</dbReference>
<dbReference type="Gene3D" id="1.10.560.10">
    <property type="entry name" value="GroEL-like equatorial domain"/>
    <property type="match status" value="1"/>
</dbReference>
<dbReference type="Gene3D" id="3.30.260.10">
    <property type="entry name" value="TCP-1-like chaperonin intermediate domain"/>
    <property type="match status" value="1"/>
</dbReference>
<dbReference type="HAMAP" id="MF_00600">
    <property type="entry name" value="CH60"/>
    <property type="match status" value="1"/>
</dbReference>
<dbReference type="InterPro" id="IPR018370">
    <property type="entry name" value="Chaperonin_Cpn60_CS"/>
</dbReference>
<dbReference type="InterPro" id="IPR001844">
    <property type="entry name" value="Cpn60/GroEL"/>
</dbReference>
<dbReference type="InterPro" id="IPR002423">
    <property type="entry name" value="Cpn60/GroEL/TCP-1"/>
</dbReference>
<dbReference type="InterPro" id="IPR027409">
    <property type="entry name" value="GroEL-like_apical_dom_sf"/>
</dbReference>
<dbReference type="InterPro" id="IPR027413">
    <property type="entry name" value="GROEL-like_equatorial_sf"/>
</dbReference>
<dbReference type="InterPro" id="IPR027410">
    <property type="entry name" value="TCP-1-like_intermed_sf"/>
</dbReference>
<dbReference type="NCBIfam" id="TIGR02348">
    <property type="entry name" value="GroEL"/>
    <property type="match status" value="1"/>
</dbReference>
<dbReference type="NCBIfam" id="NF000592">
    <property type="entry name" value="PRK00013.1"/>
    <property type="match status" value="1"/>
</dbReference>
<dbReference type="NCBIfam" id="NF009487">
    <property type="entry name" value="PRK12849.1"/>
    <property type="match status" value="1"/>
</dbReference>
<dbReference type="NCBIfam" id="NF009488">
    <property type="entry name" value="PRK12850.1"/>
    <property type="match status" value="1"/>
</dbReference>
<dbReference type="NCBIfam" id="NF009489">
    <property type="entry name" value="PRK12851.1"/>
    <property type="match status" value="1"/>
</dbReference>
<dbReference type="PANTHER" id="PTHR45633">
    <property type="entry name" value="60 KDA HEAT SHOCK PROTEIN, MITOCHONDRIAL"/>
    <property type="match status" value="1"/>
</dbReference>
<dbReference type="Pfam" id="PF00118">
    <property type="entry name" value="Cpn60_TCP1"/>
    <property type="match status" value="1"/>
</dbReference>
<dbReference type="PRINTS" id="PR00298">
    <property type="entry name" value="CHAPERONIN60"/>
</dbReference>
<dbReference type="SUPFAM" id="SSF52029">
    <property type="entry name" value="GroEL apical domain-like"/>
    <property type="match status" value="1"/>
</dbReference>
<dbReference type="SUPFAM" id="SSF48592">
    <property type="entry name" value="GroEL equatorial domain-like"/>
    <property type="match status" value="1"/>
</dbReference>
<dbReference type="SUPFAM" id="SSF54849">
    <property type="entry name" value="GroEL-intermediate domain like"/>
    <property type="match status" value="1"/>
</dbReference>
<dbReference type="PROSITE" id="PS00296">
    <property type="entry name" value="CHAPERONINS_CPN60"/>
    <property type="match status" value="1"/>
</dbReference>
<keyword id="KW-0067">ATP-binding</keyword>
<keyword id="KW-0143">Chaperone</keyword>
<keyword id="KW-0963">Cytoplasm</keyword>
<keyword id="KW-0413">Isomerase</keyword>
<keyword id="KW-0547">Nucleotide-binding</keyword>
<gene>
    <name evidence="1" type="primary">groEL</name>
    <name evidence="1" type="synonym">groL</name>
    <name type="ordered locus">Cpar_1366</name>
</gene>
<sequence>MAAKDILFDSDARAKLKVGVDKLANAVKVTLGPAGRNVLIDKKFGAPTSTKDGVTVAKEIELEDAFENMGAQMVREVASKTSDVAGDGTTTATVLAQAIYREGLKNVAAGARPIDLKRGIDRAVKEVVAELRSISRNISGKKEIAQVGTISANNDPEIGELIAEAMDKVGKDGVITVEEAKGMDTELKVVEGMQFDRGYLSPYFVTNPETMEAELEEALILIYDKKISNMKELLPILEKSAQSGRPLLIIAEDIEGEALATIVVNKLRGTLKVAAVKAPGFGDRRKAMLEDIAILTGGTVISEEKGYKLENATMAYLGQASRVNIDKDNTTIVEGKGKQEEITARINEIKGQIEKSTSDYDTEKLQERLAKLSGGVAVLNIGASTEVEMKEKKARVEDALHATRAAVQEGIVAGGGVALIRAIKGLERATADNDDQKTGIDIIRRALEEPLRQIVANTGTTDGAVVLEKVRSGEGDYGFNARTEEYENLVDAGVVDPTKVTRSALENAASVASILLTTEAAITDLPEDKADMPAMPPGGMGGMGGMY</sequence>
<proteinExistence type="inferred from homology"/>
<protein>
    <recommendedName>
        <fullName evidence="1">Chaperonin GroEL</fullName>
        <ecNumber evidence="1">5.6.1.7</ecNumber>
    </recommendedName>
    <alternativeName>
        <fullName evidence="1">60 kDa chaperonin</fullName>
    </alternativeName>
    <alternativeName>
        <fullName evidence="1">Chaperonin-60</fullName>
        <shortName evidence="1">Cpn60</shortName>
    </alternativeName>
</protein>
<reference key="1">
    <citation type="submission" date="2008-06" db="EMBL/GenBank/DDBJ databases">
        <title>Complete sequence of Chlorobaculum parvum NCIB 8327.</title>
        <authorList>
            <consortium name="US DOE Joint Genome Institute"/>
            <person name="Lucas S."/>
            <person name="Copeland A."/>
            <person name="Lapidus A."/>
            <person name="Glavina del Rio T."/>
            <person name="Dalin E."/>
            <person name="Tice H."/>
            <person name="Bruce D."/>
            <person name="Goodwin L."/>
            <person name="Pitluck S."/>
            <person name="Schmutz J."/>
            <person name="Larimer F."/>
            <person name="Land M."/>
            <person name="Hauser L."/>
            <person name="Kyrpides N."/>
            <person name="Mikhailova N."/>
            <person name="Zhao F."/>
            <person name="Li T."/>
            <person name="Liu Z."/>
            <person name="Overmann J."/>
            <person name="Bryant D.A."/>
            <person name="Richardson P."/>
        </authorList>
    </citation>
    <scope>NUCLEOTIDE SEQUENCE [LARGE SCALE GENOMIC DNA]</scope>
    <source>
        <strain>DSM 263 / NCIMB 8327</strain>
    </source>
</reference>
<feature type="chain" id="PRO_1000129987" description="Chaperonin GroEL">
    <location>
        <begin position="1"/>
        <end position="547"/>
    </location>
</feature>
<feature type="binding site" evidence="1">
    <location>
        <begin position="30"/>
        <end position="33"/>
    </location>
    <ligand>
        <name>ATP</name>
        <dbReference type="ChEBI" id="CHEBI:30616"/>
    </ligand>
</feature>
<feature type="binding site" evidence="1">
    <location>
        <position position="51"/>
    </location>
    <ligand>
        <name>ATP</name>
        <dbReference type="ChEBI" id="CHEBI:30616"/>
    </ligand>
</feature>
<feature type="binding site" evidence="1">
    <location>
        <begin position="87"/>
        <end position="91"/>
    </location>
    <ligand>
        <name>ATP</name>
        <dbReference type="ChEBI" id="CHEBI:30616"/>
    </ligand>
</feature>
<feature type="binding site" evidence="1">
    <location>
        <position position="415"/>
    </location>
    <ligand>
        <name>ATP</name>
        <dbReference type="ChEBI" id="CHEBI:30616"/>
    </ligand>
</feature>
<feature type="binding site" evidence="1">
    <location>
        <position position="496"/>
    </location>
    <ligand>
        <name>ATP</name>
        <dbReference type="ChEBI" id="CHEBI:30616"/>
    </ligand>
</feature>
<accession>B3QPB5</accession>
<evidence type="ECO:0000255" key="1">
    <source>
        <dbReference type="HAMAP-Rule" id="MF_00600"/>
    </source>
</evidence>
<comment type="function">
    <text evidence="1">Together with its co-chaperonin GroES, plays an essential role in assisting protein folding. The GroEL-GroES system forms a nano-cage that allows encapsulation of the non-native substrate proteins and provides a physical environment optimized to promote and accelerate protein folding.</text>
</comment>
<comment type="catalytic activity">
    <reaction evidence="1">
        <text>ATP + H2O + a folded polypeptide = ADP + phosphate + an unfolded polypeptide.</text>
        <dbReference type="EC" id="5.6.1.7"/>
    </reaction>
</comment>
<comment type="subunit">
    <text evidence="1">Forms a cylinder of 14 subunits composed of two heptameric rings stacked back-to-back. Interacts with the co-chaperonin GroES.</text>
</comment>
<comment type="subcellular location">
    <subcellularLocation>
        <location evidence="1">Cytoplasm</location>
    </subcellularLocation>
</comment>
<comment type="similarity">
    <text evidence="1">Belongs to the chaperonin (HSP60) family.</text>
</comment>